<organism>
    <name type="scientific">Mycobacterium tuberculosis (strain CDC 1551 / Oshkosh)</name>
    <dbReference type="NCBI Taxonomy" id="83331"/>
    <lineage>
        <taxon>Bacteria</taxon>
        <taxon>Bacillati</taxon>
        <taxon>Actinomycetota</taxon>
        <taxon>Actinomycetes</taxon>
        <taxon>Mycobacteriales</taxon>
        <taxon>Mycobacteriaceae</taxon>
        <taxon>Mycobacterium</taxon>
        <taxon>Mycobacterium tuberculosis complex</taxon>
    </lineage>
</organism>
<name>PDTAR_MYCTO</name>
<proteinExistence type="inferred from homology"/>
<accession>P9WGM2</accession>
<accession>L0T8T8</accession>
<accession>O06143</accession>
<accession>Q7D890</accession>
<comment type="function">
    <text evidence="1">Member of the two-component regulatory system PdtaR/PdtaS. This two-component system plays an essential role in mycobacterial adaptation to poor nutrient conditions. PdtaR probably acts at the level of transcriptional antitermination rather than transcriptional initiation.</text>
</comment>
<comment type="function">
    <text evidence="1">In addition, the PdtaR/PdtaS two-component system controls copper and nitric oxide (NO) resistance downstream of the intramembrane protease Rip1. This coupled Rip1/PdtaS/PdtaR circuit controls NO resistance and acute lung infection in mice by relieving PdtaR/PdtaS-mediated repression of isonitrile chalkophore biosynthesis. Two signals are required to fully inactivate the PdtaR/PdtaS system and mediate NO resistance: a cytoplasmic inhibitory signal through the PdtaS kinase mediated by direct sensing of NO and the production of PPE1-5', an NO-induced small RNA, to sequester PdtaR.</text>
</comment>
<comment type="subcellular location">
    <subcellularLocation>
        <location evidence="1">Cytoplasm</location>
    </subcellularLocation>
</comment>
<comment type="domain">
    <text evidence="1">Contains a C-terminal ANTAR domain, which is a RNA binding domain.</text>
</comment>
<comment type="PTM">
    <text evidence="1">Phosphorylated and activated by PdtaS.</text>
</comment>
<comment type="sequence caution" evidence="4">
    <conflict type="erroneous initiation">
        <sequence resource="EMBL-CDS" id="AAK45932"/>
    </conflict>
    <text>Extended N-terminus.</text>
</comment>
<dbReference type="EMBL" id="AE000516">
    <property type="protein sequence ID" value="AAK45932.1"/>
    <property type="status" value="ALT_INIT"/>
    <property type="molecule type" value="Genomic_DNA"/>
</dbReference>
<dbReference type="PIR" id="H70558">
    <property type="entry name" value="H70558"/>
</dbReference>
<dbReference type="RefSeq" id="WP_003408045.1">
    <property type="nucleotide sequence ID" value="NZ_KK341227.1"/>
</dbReference>
<dbReference type="SMR" id="P9WGM2"/>
<dbReference type="KEGG" id="mtc:MT1662"/>
<dbReference type="PATRIC" id="fig|83331.31.peg.1785"/>
<dbReference type="HOGENOM" id="CLU_000445_65_0_11"/>
<dbReference type="Proteomes" id="UP000001020">
    <property type="component" value="Chromosome"/>
</dbReference>
<dbReference type="GO" id="GO:0005737">
    <property type="term" value="C:cytoplasm"/>
    <property type="evidence" value="ECO:0007669"/>
    <property type="project" value="UniProtKB-SubCell"/>
</dbReference>
<dbReference type="GO" id="GO:0003723">
    <property type="term" value="F:RNA binding"/>
    <property type="evidence" value="ECO:0007669"/>
    <property type="project" value="InterPro"/>
</dbReference>
<dbReference type="GO" id="GO:0000160">
    <property type="term" value="P:phosphorelay signal transduction system"/>
    <property type="evidence" value="ECO:0007669"/>
    <property type="project" value="UniProtKB-KW"/>
</dbReference>
<dbReference type="GO" id="GO:0031564">
    <property type="term" value="P:transcription antitermination"/>
    <property type="evidence" value="ECO:0007669"/>
    <property type="project" value="UniProtKB-KW"/>
</dbReference>
<dbReference type="CDD" id="cd19932">
    <property type="entry name" value="REC_PdtaR-like"/>
    <property type="match status" value="1"/>
</dbReference>
<dbReference type="FunFam" id="1.10.10.10:FF:000157">
    <property type="entry name" value="Response regulator receiver"/>
    <property type="match status" value="1"/>
</dbReference>
<dbReference type="FunFam" id="3.40.50.2300:FF:000050">
    <property type="entry name" value="Response regulator receiver"/>
    <property type="match status" value="1"/>
</dbReference>
<dbReference type="Gene3D" id="3.40.50.2300">
    <property type="match status" value="1"/>
</dbReference>
<dbReference type="Gene3D" id="1.10.10.10">
    <property type="entry name" value="Winged helix-like DNA-binding domain superfamily/Winged helix DNA-binding domain"/>
    <property type="match status" value="1"/>
</dbReference>
<dbReference type="InterPro" id="IPR005561">
    <property type="entry name" value="ANTAR"/>
</dbReference>
<dbReference type="InterPro" id="IPR011006">
    <property type="entry name" value="CheY-like_superfamily"/>
</dbReference>
<dbReference type="InterPro" id="IPR048029">
    <property type="entry name" value="PdtaR_REC"/>
</dbReference>
<dbReference type="InterPro" id="IPR008327">
    <property type="entry name" value="Sig_transdc_resp-reg_antiterm"/>
</dbReference>
<dbReference type="InterPro" id="IPR001789">
    <property type="entry name" value="Sig_transdc_resp-reg_receiver"/>
</dbReference>
<dbReference type="InterPro" id="IPR036388">
    <property type="entry name" value="WH-like_DNA-bd_sf"/>
</dbReference>
<dbReference type="PANTHER" id="PTHR43367">
    <property type="match status" value="1"/>
</dbReference>
<dbReference type="PANTHER" id="PTHR43367:SF1">
    <property type="entry name" value="TWO-COMPONENT RESPONSE REGULATOR-LIKE APRR6-RELATED"/>
    <property type="match status" value="1"/>
</dbReference>
<dbReference type="Pfam" id="PF03861">
    <property type="entry name" value="ANTAR"/>
    <property type="match status" value="1"/>
</dbReference>
<dbReference type="Pfam" id="PF00072">
    <property type="entry name" value="Response_reg"/>
    <property type="match status" value="1"/>
</dbReference>
<dbReference type="PIRSF" id="PIRSF036382">
    <property type="entry name" value="RR_antiterm"/>
    <property type="match status" value="1"/>
</dbReference>
<dbReference type="SMART" id="SM01012">
    <property type="entry name" value="ANTAR"/>
    <property type="match status" value="1"/>
</dbReference>
<dbReference type="SMART" id="SM00448">
    <property type="entry name" value="REC"/>
    <property type="match status" value="1"/>
</dbReference>
<dbReference type="SUPFAM" id="SSF52172">
    <property type="entry name" value="CheY-like"/>
    <property type="match status" value="1"/>
</dbReference>
<dbReference type="PROSITE" id="PS50921">
    <property type="entry name" value="ANTAR"/>
    <property type="match status" value="1"/>
</dbReference>
<dbReference type="PROSITE" id="PS50110">
    <property type="entry name" value="RESPONSE_REGULATORY"/>
    <property type="match status" value="1"/>
</dbReference>
<protein>
    <recommendedName>
        <fullName evidence="1">Transcriptional regulatory protein PdtaR</fullName>
    </recommendedName>
</protein>
<evidence type="ECO:0000250" key="1">
    <source>
        <dbReference type="UniProtKB" id="P9WGM3"/>
    </source>
</evidence>
<evidence type="ECO:0000255" key="2">
    <source>
        <dbReference type="PROSITE-ProRule" id="PRU00169"/>
    </source>
</evidence>
<evidence type="ECO:0000255" key="3">
    <source>
        <dbReference type="PROSITE-ProRule" id="PRU00308"/>
    </source>
</evidence>
<evidence type="ECO:0000305" key="4"/>
<reference key="1">
    <citation type="journal article" date="2002" name="J. Bacteriol.">
        <title>Whole-genome comparison of Mycobacterium tuberculosis clinical and laboratory strains.</title>
        <authorList>
            <person name="Fleischmann R.D."/>
            <person name="Alland D."/>
            <person name="Eisen J.A."/>
            <person name="Carpenter L."/>
            <person name="White O."/>
            <person name="Peterson J.D."/>
            <person name="DeBoy R.T."/>
            <person name="Dodson R.J."/>
            <person name="Gwinn M.L."/>
            <person name="Haft D.H."/>
            <person name="Hickey E.K."/>
            <person name="Kolonay J.F."/>
            <person name="Nelson W.C."/>
            <person name="Umayam L.A."/>
            <person name="Ermolaeva M.D."/>
            <person name="Salzberg S.L."/>
            <person name="Delcher A."/>
            <person name="Utterback T.R."/>
            <person name="Weidman J.F."/>
            <person name="Khouri H.M."/>
            <person name="Gill J."/>
            <person name="Mikula A."/>
            <person name="Bishai W."/>
            <person name="Jacobs W.R. Jr."/>
            <person name="Venter J.C."/>
            <person name="Fraser C.M."/>
        </authorList>
    </citation>
    <scope>NUCLEOTIDE SEQUENCE [LARGE SCALE GENOMIC DNA]</scope>
    <source>
        <strain>CDC 1551 / Oshkosh</strain>
    </source>
</reference>
<sequence length="205" mass="22669">MTGPTTDADAAVPRRVLIAEDEALIRMDLAEMLREEGYEIVGEAGDGQEAVELAELHKPDLVIMDVKMPRRDGIDAASEIASKRIAPIVVLTAFSQRDLVERARDAGAMAYLVKPFSISDLIPAIELAVSRFREITALEGEVATLSERLETRKLVERAKGLLQTKHGMTEPDAFKWIQRAAMDRRTTMKRVAEVVLETLGTPKDT</sequence>
<gene>
    <name type="primary">pdtaR</name>
    <name type="ordered locus">MT1662</name>
</gene>
<feature type="chain" id="PRO_0000428337" description="Transcriptional regulatory protein PdtaR">
    <location>
        <begin position="1"/>
        <end position="205"/>
    </location>
</feature>
<feature type="domain" description="Response regulatory" evidence="2">
    <location>
        <begin position="15"/>
        <end position="129"/>
    </location>
</feature>
<feature type="domain" description="ANTAR" evidence="3">
    <location>
        <begin position="135"/>
        <end position="196"/>
    </location>
</feature>
<feature type="modified residue" description="4-aspartylphosphate" evidence="2">
    <location>
        <position position="65"/>
    </location>
</feature>
<keyword id="KW-0963">Cytoplasm</keyword>
<keyword id="KW-0597">Phosphoprotein</keyword>
<keyword id="KW-1185">Reference proteome</keyword>
<keyword id="KW-0346">Stress response</keyword>
<keyword id="KW-0804">Transcription</keyword>
<keyword id="KW-0889">Transcription antitermination</keyword>
<keyword id="KW-0805">Transcription regulation</keyword>
<keyword id="KW-0902">Two-component regulatory system</keyword>